<gene>
    <name evidence="1" type="primary">rpmE</name>
    <name type="ordered locus">ECA4257</name>
</gene>
<evidence type="ECO:0000255" key="1">
    <source>
        <dbReference type="HAMAP-Rule" id="MF_00501"/>
    </source>
</evidence>
<evidence type="ECO:0000305" key="2"/>
<comment type="function">
    <text evidence="1">Binds the 23S rRNA.</text>
</comment>
<comment type="cofactor">
    <cofactor evidence="1">
        <name>Zn(2+)</name>
        <dbReference type="ChEBI" id="CHEBI:29105"/>
    </cofactor>
    <text evidence="1">Binds 1 zinc ion per subunit.</text>
</comment>
<comment type="subunit">
    <text evidence="1">Part of the 50S ribosomal subunit.</text>
</comment>
<comment type="similarity">
    <text evidence="1">Belongs to the bacterial ribosomal protein bL31 family. Type A subfamily.</text>
</comment>
<proteinExistence type="inferred from homology"/>
<sequence>MKKGIHPNYSEVTVTCSCGNVIKTHSTVGRDLNLDVCGECHPFYTGKQRDVASGGRVDRFNKRFSVPGAKK</sequence>
<organism>
    <name type="scientific">Pectobacterium atrosepticum (strain SCRI 1043 / ATCC BAA-672)</name>
    <name type="common">Erwinia carotovora subsp. atroseptica</name>
    <dbReference type="NCBI Taxonomy" id="218491"/>
    <lineage>
        <taxon>Bacteria</taxon>
        <taxon>Pseudomonadati</taxon>
        <taxon>Pseudomonadota</taxon>
        <taxon>Gammaproteobacteria</taxon>
        <taxon>Enterobacterales</taxon>
        <taxon>Pectobacteriaceae</taxon>
        <taxon>Pectobacterium</taxon>
    </lineage>
</organism>
<name>RL31_PECAS</name>
<feature type="chain" id="PRO_0000173105" description="Large ribosomal subunit protein bL31">
    <location>
        <begin position="1"/>
        <end position="71"/>
    </location>
</feature>
<feature type="binding site" evidence="1">
    <location>
        <position position="16"/>
    </location>
    <ligand>
        <name>Zn(2+)</name>
        <dbReference type="ChEBI" id="CHEBI:29105"/>
    </ligand>
</feature>
<feature type="binding site" evidence="1">
    <location>
        <position position="18"/>
    </location>
    <ligand>
        <name>Zn(2+)</name>
        <dbReference type="ChEBI" id="CHEBI:29105"/>
    </ligand>
</feature>
<feature type="binding site" evidence="1">
    <location>
        <position position="37"/>
    </location>
    <ligand>
        <name>Zn(2+)</name>
        <dbReference type="ChEBI" id="CHEBI:29105"/>
    </ligand>
</feature>
<feature type="binding site" evidence="1">
    <location>
        <position position="40"/>
    </location>
    <ligand>
        <name>Zn(2+)</name>
        <dbReference type="ChEBI" id="CHEBI:29105"/>
    </ligand>
</feature>
<protein>
    <recommendedName>
        <fullName evidence="1">Large ribosomal subunit protein bL31</fullName>
    </recommendedName>
    <alternativeName>
        <fullName evidence="2">50S ribosomal protein L31</fullName>
    </alternativeName>
</protein>
<dbReference type="EMBL" id="BX950851">
    <property type="protein sequence ID" value="CAG77154.1"/>
    <property type="molecule type" value="Genomic_DNA"/>
</dbReference>
<dbReference type="RefSeq" id="WP_011095726.1">
    <property type="nucleotide sequence ID" value="NC_004547.2"/>
</dbReference>
<dbReference type="SMR" id="Q6CZ96"/>
<dbReference type="STRING" id="218491.ECA4257"/>
<dbReference type="GeneID" id="57210929"/>
<dbReference type="KEGG" id="eca:ECA4257"/>
<dbReference type="eggNOG" id="COG0254">
    <property type="taxonomic scope" value="Bacteria"/>
</dbReference>
<dbReference type="HOGENOM" id="CLU_114306_4_3_6"/>
<dbReference type="OrthoDB" id="9803251at2"/>
<dbReference type="Proteomes" id="UP000007966">
    <property type="component" value="Chromosome"/>
</dbReference>
<dbReference type="GO" id="GO:1990904">
    <property type="term" value="C:ribonucleoprotein complex"/>
    <property type="evidence" value="ECO:0007669"/>
    <property type="project" value="UniProtKB-KW"/>
</dbReference>
<dbReference type="GO" id="GO:0005840">
    <property type="term" value="C:ribosome"/>
    <property type="evidence" value="ECO:0007669"/>
    <property type="project" value="UniProtKB-KW"/>
</dbReference>
<dbReference type="GO" id="GO:0046872">
    <property type="term" value="F:metal ion binding"/>
    <property type="evidence" value="ECO:0007669"/>
    <property type="project" value="UniProtKB-KW"/>
</dbReference>
<dbReference type="GO" id="GO:0019843">
    <property type="term" value="F:rRNA binding"/>
    <property type="evidence" value="ECO:0007669"/>
    <property type="project" value="UniProtKB-KW"/>
</dbReference>
<dbReference type="GO" id="GO:0003735">
    <property type="term" value="F:structural constituent of ribosome"/>
    <property type="evidence" value="ECO:0007669"/>
    <property type="project" value="InterPro"/>
</dbReference>
<dbReference type="GO" id="GO:0006412">
    <property type="term" value="P:translation"/>
    <property type="evidence" value="ECO:0007669"/>
    <property type="project" value="UniProtKB-UniRule"/>
</dbReference>
<dbReference type="FunFam" id="4.10.830.30:FF:000001">
    <property type="entry name" value="50S ribosomal protein L31"/>
    <property type="match status" value="1"/>
</dbReference>
<dbReference type="Gene3D" id="4.10.830.30">
    <property type="entry name" value="Ribosomal protein L31"/>
    <property type="match status" value="1"/>
</dbReference>
<dbReference type="HAMAP" id="MF_00501">
    <property type="entry name" value="Ribosomal_bL31_1"/>
    <property type="match status" value="1"/>
</dbReference>
<dbReference type="InterPro" id="IPR034704">
    <property type="entry name" value="Ribosomal_bL28/bL31-like_sf"/>
</dbReference>
<dbReference type="InterPro" id="IPR002150">
    <property type="entry name" value="Ribosomal_bL31"/>
</dbReference>
<dbReference type="InterPro" id="IPR027491">
    <property type="entry name" value="Ribosomal_bL31_A"/>
</dbReference>
<dbReference type="InterPro" id="IPR042105">
    <property type="entry name" value="Ribosomal_bL31_sf"/>
</dbReference>
<dbReference type="NCBIfam" id="TIGR00105">
    <property type="entry name" value="L31"/>
    <property type="match status" value="1"/>
</dbReference>
<dbReference type="NCBIfam" id="NF000612">
    <property type="entry name" value="PRK00019.1"/>
    <property type="match status" value="1"/>
</dbReference>
<dbReference type="PANTHER" id="PTHR33280">
    <property type="entry name" value="50S RIBOSOMAL PROTEIN L31, CHLOROPLASTIC"/>
    <property type="match status" value="1"/>
</dbReference>
<dbReference type="PANTHER" id="PTHR33280:SF6">
    <property type="entry name" value="LARGE RIBOSOMAL SUBUNIT PROTEIN BL31A"/>
    <property type="match status" value="1"/>
</dbReference>
<dbReference type="Pfam" id="PF01197">
    <property type="entry name" value="Ribosomal_L31"/>
    <property type="match status" value="1"/>
</dbReference>
<dbReference type="PRINTS" id="PR01249">
    <property type="entry name" value="RIBOSOMALL31"/>
</dbReference>
<dbReference type="SUPFAM" id="SSF143800">
    <property type="entry name" value="L28p-like"/>
    <property type="match status" value="1"/>
</dbReference>
<dbReference type="PROSITE" id="PS01143">
    <property type="entry name" value="RIBOSOMAL_L31"/>
    <property type="match status" value="1"/>
</dbReference>
<keyword id="KW-0479">Metal-binding</keyword>
<keyword id="KW-1185">Reference proteome</keyword>
<keyword id="KW-0687">Ribonucleoprotein</keyword>
<keyword id="KW-0689">Ribosomal protein</keyword>
<keyword id="KW-0694">RNA-binding</keyword>
<keyword id="KW-0699">rRNA-binding</keyword>
<keyword id="KW-0862">Zinc</keyword>
<accession>Q6CZ96</accession>
<reference key="1">
    <citation type="journal article" date="2004" name="Proc. Natl. Acad. Sci. U.S.A.">
        <title>Genome sequence of the enterobacterial phytopathogen Erwinia carotovora subsp. atroseptica and characterization of virulence factors.</title>
        <authorList>
            <person name="Bell K.S."/>
            <person name="Sebaihia M."/>
            <person name="Pritchard L."/>
            <person name="Holden M.T.G."/>
            <person name="Hyman L.J."/>
            <person name="Holeva M.C."/>
            <person name="Thomson N.R."/>
            <person name="Bentley S.D."/>
            <person name="Churcher L.J.C."/>
            <person name="Mungall K."/>
            <person name="Atkin R."/>
            <person name="Bason N."/>
            <person name="Brooks K."/>
            <person name="Chillingworth T."/>
            <person name="Clark K."/>
            <person name="Doggett J."/>
            <person name="Fraser A."/>
            <person name="Hance Z."/>
            <person name="Hauser H."/>
            <person name="Jagels K."/>
            <person name="Moule S."/>
            <person name="Norbertczak H."/>
            <person name="Ormond D."/>
            <person name="Price C."/>
            <person name="Quail M.A."/>
            <person name="Sanders M."/>
            <person name="Walker D."/>
            <person name="Whitehead S."/>
            <person name="Salmond G.P.C."/>
            <person name="Birch P.R.J."/>
            <person name="Parkhill J."/>
            <person name="Toth I.K."/>
        </authorList>
    </citation>
    <scope>NUCLEOTIDE SEQUENCE [LARGE SCALE GENOMIC DNA]</scope>
    <source>
        <strain>SCRI 1043 / ATCC BAA-672</strain>
    </source>
</reference>